<name>TILS_WOLPM</name>
<proteinExistence type="inferred from homology"/>
<reference key="1">
    <citation type="journal article" date="2004" name="PLoS Biol.">
        <title>Phylogenomics of the reproductive parasite Wolbachia pipientis wMel: a streamlined genome overrun by mobile genetic elements.</title>
        <authorList>
            <person name="Wu M."/>
            <person name="Sun L.V."/>
            <person name="Vamathevan J.J."/>
            <person name="Riegler M."/>
            <person name="DeBoy R.T."/>
            <person name="Brownlie J.C."/>
            <person name="McGraw E.A."/>
            <person name="Martin W."/>
            <person name="Esser C."/>
            <person name="Ahmadinejad N."/>
            <person name="Wiegand C."/>
            <person name="Madupu R."/>
            <person name="Beanan M.J."/>
            <person name="Brinkac L.M."/>
            <person name="Daugherty S.C."/>
            <person name="Durkin A.S."/>
            <person name="Kolonay J.F."/>
            <person name="Nelson W.C."/>
            <person name="Mohamoud Y."/>
            <person name="Lee P."/>
            <person name="Berry K.J."/>
            <person name="Young M.B."/>
            <person name="Utterback T.R."/>
            <person name="Weidman J.F."/>
            <person name="Nierman W.C."/>
            <person name="Paulsen I.T."/>
            <person name="Nelson K.E."/>
            <person name="Tettelin H."/>
            <person name="O'Neill S.L."/>
            <person name="Eisen J.A."/>
        </authorList>
    </citation>
    <scope>NUCLEOTIDE SEQUENCE [LARGE SCALE GENOMIC DNA]</scope>
</reference>
<accession>Q73FR9</accession>
<keyword id="KW-0067">ATP-binding</keyword>
<keyword id="KW-0963">Cytoplasm</keyword>
<keyword id="KW-0436">Ligase</keyword>
<keyword id="KW-0547">Nucleotide-binding</keyword>
<keyword id="KW-0819">tRNA processing</keyword>
<evidence type="ECO:0000255" key="1">
    <source>
        <dbReference type="HAMAP-Rule" id="MF_01161"/>
    </source>
</evidence>
<protein>
    <recommendedName>
        <fullName evidence="1">tRNA(Ile)-lysidine synthase</fullName>
        <ecNumber evidence="1">6.3.4.19</ecNumber>
    </recommendedName>
    <alternativeName>
        <fullName evidence="1">tRNA(Ile)-2-lysyl-cytidine synthase</fullName>
    </alternativeName>
    <alternativeName>
        <fullName evidence="1">tRNA(Ile)-lysidine synthetase</fullName>
    </alternativeName>
</protein>
<sequence length="431" mass="49545">MELELLFQNVVNSSAFYNNQVAVAVSGGVDSIVLLHLMTNWAKKNKLSLPIALTVNHGLRPESQKEADFVVSYAKELGAKESFILNWEKQNIKGNIQLQARKARYKLLAEWCKNNNVKYLLVAHHKDDQAETFLLRLERGSGVDGLSSMDYKSFLNGIDIFRPLLNFSRSEIEKYAKLHRLKWIEDRSNHDLKYRRTLYRNLLKASDNQEILTERICLTALHMKRAAKALMHYTRLAFNDCVNVHDLGYIEIKLSEFYQLPEEIALRLLLYSIMAIASKHYKPRYSSLIAIFNRILQKDSNVNCTLSGCKIRKYGENILIIRESSRIQEITVNLPLNEPTQWDNRFSCTILGNQGCSVIIAPLKKTQKVPEFLKDYNCCPEVFYSLPTVQKDSKVLAYPDVNYNGKNTNDDKVQCIINSTIKQNLVSLISI</sequence>
<organism>
    <name type="scientific">Wolbachia pipientis wMel</name>
    <dbReference type="NCBI Taxonomy" id="163164"/>
    <lineage>
        <taxon>Bacteria</taxon>
        <taxon>Pseudomonadati</taxon>
        <taxon>Pseudomonadota</taxon>
        <taxon>Alphaproteobacteria</taxon>
        <taxon>Rickettsiales</taxon>
        <taxon>Anaplasmataceae</taxon>
        <taxon>Wolbachieae</taxon>
        <taxon>Wolbachia</taxon>
    </lineage>
</organism>
<comment type="function">
    <text evidence="1">Ligates lysine onto the cytidine present at position 34 of the AUA codon-specific tRNA(Ile) that contains the anticodon CAU, in an ATP-dependent manner. Cytidine is converted to lysidine, thus changing the amino acid specificity of the tRNA from methionine to isoleucine.</text>
</comment>
<comment type="catalytic activity">
    <reaction evidence="1">
        <text>cytidine(34) in tRNA(Ile2) + L-lysine + ATP = lysidine(34) in tRNA(Ile2) + AMP + diphosphate + H(+)</text>
        <dbReference type="Rhea" id="RHEA:43744"/>
        <dbReference type="Rhea" id="RHEA-COMP:10625"/>
        <dbReference type="Rhea" id="RHEA-COMP:10670"/>
        <dbReference type="ChEBI" id="CHEBI:15378"/>
        <dbReference type="ChEBI" id="CHEBI:30616"/>
        <dbReference type="ChEBI" id="CHEBI:32551"/>
        <dbReference type="ChEBI" id="CHEBI:33019"/>
        <dbReference type="ChEBI" id="CHEBI:82748"/>
        <dbReference type="ChEBI" id="CHEBI:83665"/>
        <dbReference type="ChEBI" id="CHEBI:456215"/>
        <dbReference type="EC" id="6.3.4.19"/>
    </reaction>
</comment>
<comment type="subcellular location">
    <subcellularLocation>
        <location evidence="1">Cytoplasm</location>
    </subcellularLocation>
</comment>
<comment type="domain">
    <text>The N-terminal region contains the highly conserved SGGXDS motif, predicted to be a P-loop motif involved in ATP binding.</text>
</comment>
<comment type="similarity">
    <text evidence="1">Belongs to the tRNA(Ile)-lysidine synthase family.</text>
</comment>
<dbReference type="EC" id="6.3.4.19" evidence="1"/>
<dbReference type="EMBL" id="AE017196">
    <property type="protein sequence ID" value="AAS14900.1"/>
    <property type="molecule type" value="Genomic_DNA"/>
</dbReference>
<dbReference type="RefSeq" id="WP_010963134.1">
    <property type="nucleotide sequence ID" value="NZ_OX384529.1"/>
</dbReference>
<dbReference type="SMR" id="Q73FR9"/>
<dbReference type="EnsemblBacteria" id="AAS14900">
    <property type="protein sequence ID" value="AAS14900"/>
    <property type="gene ID" value="WD_1254"/>
</dbReference>
<dbReference type="GeneID" id="70036724"/>
<dbReference type="KEGG" id="wol:WD_1254"/>
<dbReference type="eggNOG" id="COG0037">
    <property type="taxonomic scope" value="Bacteria"/>
</dbReference>
<dbReference type="Proteomes" id="UP000008215">
    <property type="component" value="Chromosome"/>
</dbReference>
<dbReference type="GO" id="GO:0005737">
    <property type="term" value="C:cytoplasm"/>
    <property type="evidence" value="ECO:0007669"/>
    <property type="project" value="UniProtKB-SubCell"/>
</dbReference>
<dbReference type="GO" id="GO:0005524">
    <property type="term" value="F:ATP binding"/>
    <property type="evidence" value="ECO:0007669"/>
    <property type="project" value="UniProtKB-UniRule"/>
</dbReference>
<dbReference type="GO" id="GO:0032267">
    <property type="term" value="F:tRNA(Ile)-lysidine synthase activity"/>
    <property type="evidence" value="ECO:0007669"/>
    <property type="project" value="UniProtKB-EC"/>
</dbReference>
<dbReference type="GO" id="GO:0006400">
    <property type="term" value="P:tRNA modification"/>
    <property type="evidence" value="ECO:0007669"/>
    <property type="project" value="UniProtKB-UniRule"/>
</dbReference>
<dbReference type="CDD" id="cd01992">
    <property type="entry name" value="TilS_N"/>
    <property type="match status" value="1"/>
</dbReference>
<dbReference type="Gene3D" id="3.40.50.620">
    <property type="entry name" value="HUPs"/>
    <property type="match status" value="1"/>
</dbReference>
<dbReference type="HAMAP" id="MF_01161">
    <property type="entry name" value="tRNA_Ile_lys_synt"/>
    <property type="match status" value="1"/>
</dbReference>
<dbReference type="InterPro" id="IPR014729">
    <property type="entry name" value="Rossmann-like_a/b/a_fold"/>
</dbReference>
<dbReference type="InterPro" id="IPR011063">
    <property type="entry name" value="TilS/TtcA_N"/>
</dbReference>
<dbReference type="InterPro" id="IPR012094">
    <property type="entry name" value="tRNA_Ile_lys_synt"/>
</dbReference>
<dbReference type="InterPro" id="IPR012795">
    <property type="entry name" value="tRNA_Ile_lys_synt_N"/>
</dbReference>
<dbReference type="NCBIfam" id="TIGR02432">
    <property type="entry name" value="lysidine_TilS_N"/>
    <property type="match status" value="1"/>
</dbReference>
<dbReference type="PANTHER" id="PTHR43033">
    <property type="entry name" value="TRNA(ILE)-LYSIDINE SYNTHASE-RELATED"/>
    <property type="match status" value="1"/>
</dbReference>
<dbReference type="PANTHER" id="PTHR43033:SF1">
    <property type="entry name" value="TRNA(ILE)-LYSIDINE SYNTHASE-RELATED"/>
    <property type="match status" value="1"/>
</dbReference>
<dbReference type="Pfam" id="PF01171">
    <property type="entry name" value="ATP_bind_3"/>
    <property type="match status" value="1"/>
</dbReference>
<dbReference type="SUPFAM" id="SSF52402">
    <property type="entry name" value="Adenine nucleotide alpha hydrolases-like"/>
    <property type="match status" value="1"/>
</dbReference>
<gene>
    <name evidence="1" type="primary">tilS</name>
    <name type="ordered locus">WD_1254</name>
</gene>
<feature type="chain" id="PRO_0000181805" description="tRNA(Ile)-lysidine synthase">
    <location>
        <begin position="1"/>
        <end position="431"/>
    </location>
</feature>
<feature type="binding site" evidence="1">
    <location>
        <begin position="26"/>
        <end position="31"/>
    </location>
    <ligand>
        <name>ATP</name>
        <dbReference type="ChEBI" id="CHEBI:30616"/>
    </ligand>
</feature>